<feature type="chain" id="PRO_0000216320" description="Uncharacterized protein PM1205">
    <location>
        <begin position="1"/>
        <end position="125"/>
    </location>
</feature>
<organism>
    <name type="scientific">Pasteurella multocida (strain Pm70)</name>
    <dbReference type="NCBI Taxonomy" id="272843"/>
    <lineage>
        <taxon>Bacteria</taxon>
        <taxon>Pseudomonadati</taxon>
        <taxon>Pseudomonadota</taxon>
        <taxon>Gammaproteobacteria</taxon>
        <taxon>Pasteurellales</taxon>
        <taxon>Pasteurellaceae</taxon>
        <taxon>Pasteurella</taxon>
    </lineage>
</organism>
<proteinExistence type="predicted"/>
<accession>Q9CLL9</accession>
<dbReference type="EMBL" id="AE004439">
    <property type="protein sequence ID" value="AAK03289.1"/>
    <property type="molecule type" value="Genomic_DNA"/>
</dbReference>
<dbReference type="RefSeq" id="WP_010907072.1">
    <property type="nucleotide sequence ID" value="NC_002663.1"/>
</dbReference>
<dbReference type="STRING" id="272843.PM1205"/>
<dbReference type="EnsemblBacteria" id="AAK03289">
    <property type="protein sequence ID" value="AAK03289"/>
    <property type="gene ID" value="PM1205"/>
</dbReference>
<dbReference type="KEGG" id="pmu:PM1205"/>
<dbReference type="HOGENOM" id="CLU_2195782_0_0_6"/>
<dbReference type="OrthoDB" id="2339538at2"/>
<dbReference type="Proteomes" id="UP000000809">
    <property type="component" value="Chromosome"/>
</dbReference>
<protein>
    <recommendedName>
        <fullName>Uncharacterized protein PM1205</fullName>
    </recommendedName>
</protein>
<keyword id="KW-1185">Reference proteome</keyword>
<name>Y1205_PASMU</name>
<gene>
    <name type="ordered locus">PM1205</name>
</gene>
<reference key="1">
    <citation type="journal article" date="2001" name="Proc. Natl. Acad. Sci. U.S.A.">
        <title>Complete genomic sequence of Pasteurella multocida Pm70.</title>
        <authorList>
            <person name="May B.J."/>
            <person name="Zhang Q."/>
            <person name="Li L.L."/>
            <person name="Paustian M.L."/>
            <person name="Whittam T.S."/>
            <person name="Kapur V."/>
        </authorList>
    </citation>
    <scope>NUCLEOTIDE SEQUENCE [LARGE SCALE GENOMIC DNA]</scope>
    <source>
        <strain>Pm70</strain>
    </source>
</reference>
<sequence>MKKSEFKNSFIELLSNNIDNLNYDEKIHFIKKILTEYEIEKDKTDRTPVNKGQPWNDHQLELILSLPATKKNCLKFAKIFGRGYGSIEQIYRWASTPKNQLTKERLNDAFIQQIMRVKRNLELRN</sequence>